<dbReference type="EC" id="2.7.11.14" evidence="3"/>
<dbReference type="EMBL" id="EU621673">
    <property type="protein sequence ID" value="ACF28430.1"/>
    <property type="molecule type" value="mRNA"/>
</dbReference>
<dbReference type="RefSeq" id="NP_001131051.1">
    <property type="nucleotide sequence ID" value="NM_001137579.1"/>
</dbReference>
<dbReference type="SMR" id="B6CZ17"/>
<dbReference type="iPTMnet" id="B6CZ17"/>
<dbReference type="GeneID" id="100192358"/>
<dbReference type="KEGG" id="xla:100192358"/>
<dbReference type="AGR" id="Xenbase:XB-GENE-6055238"/>
<dbReference type="CTD" id="100192358"/>
<dbReference type="Xenbase" id="XB-GENE-6055238">
    <property type="gene designation" value="grk7.L"/>
</dbReference>
<dbReference type="OMA" id="YFTEFRV"/>
<dbReference type="OrthoDB" id="354826at2759"/>
<dbReference type="Proteomes" id="UP000186698">
    <property type="component" value="Chromosome 5L"/>
</dbReference>
<dbReference type="Bgee" id="100192358">
    <property type="expression patterns" value="Expressed in camera-type eye and 3 other cell types or tissues"/>
</dbReference>
<dbReference type="GO" id="GO:0005737">
    <property type="term" value="C:cytoplasm"/>
    <property type="evidence" value="ECO:0000318"/>
    <property type="project" value="GO_Central"/>
</dbReference>
<dbReference type="GO" id="GO:0016020">
    <property type="term" value="C:membrane"/>
    <property type="evidence" value="ECO:0007669"/>
    <property type="project" value="UniProtKB-SubCell"/>
</dbReference>
<dbReference type="GO" id="GO:0005524">
    <property type="term" value="F:ATP binding"/>
    <property type="evidence" value="ECO:0007669"/>
    <property type="project" value="UniProtKB-KW"/>
</dbReference>
<dbReference type="GO" id="GO:0050254">
    <property type="term" value="F:rhodopsin kinase activity"/>
    <property type="evidence" value="ECO:0000250"/>
    <property type="project" value="UniProtKB"/>
</dbReference>
<dbReference type="GO" id="GO:0009966">
    <property type="term" value="P:regulation of signal transduction"/>
    <property type="evidence" value="ECO:0000318"/>
    <property type="project" value="GO_Central"/>
</dbReference>
<dbReference type="GO" id="GO:0007165">
    <property type="term" value="P:signal transduction"/>
    <property type="evidence" value="ECO:0007669"/>
    <property type="project" value="InterPro"/>
</dbReference>
<dbReference type="GO" id="GO:0007601">
    <property type="term" value="P:visual perception"/>
    <property type="evidence" value="ECO:0007669"/>
    <property type="project" value="UniProtKB-KW"/>
</dbReference>
<dbReference type="CDD" id="cd05607">
    <property type="entry name" value="STKc_GRK7"/>
    <property type="match status" value="1"/>
</dbReference>
<dbReference type="FunFam" id="1.10.167.10:FF:000027">
    <property type="entry name" value="G protein-coupled receptor kinase"/>
    <property type="match status" value="1"/>
</dbReference>
<dbReference type="FunFam" id="1.10.510.10:FF:000074">
    <property type="entry name" value="G protein-coupled receptor kinase"/>
    <property type="match status" value="1"/>
</dbReference>
<dbReference type="Gene3D" id="3.30.200.20">
    <property type="entry name" value="Phosphorylase Kinase, domain 1"/>
    <property type="match status" value="1"/>
</dbReference>
<dbReference type="Gene3D" id="1.10.167.10">
    <property type="entry name" value="Regulator of G-protein Signalling 4, domain 2"/>
    <property type="match status" value="1"/>
</dbReference>
<dbReference type="Gene3D" id="1.10.510.10">
    <property type="entry name" value="Transferase(Phosphotransferase) domain 1"/>
    <property type="match status" value="1"/>
</dbReference>
<dbReference type="InterPro" id="IPR000961">
    <property type="entry name" value="AGC-kinase_C"/>
</dbReference>
<dbReference type="InterPro" id="IPR000239">
    <property type="entry name" value="GPCR_kinase"/>
</dbReference>
<dbReference type="InterPro" id="IPR011009">
    <property type="entry name" value="Kinase-like_dom_sf"/>
</dbReference>
<dbReference type="InterPro" id="IPR000719">
    <property type="entry name" value="Prot_kinase_dom"/>
</dbReference>
<dbReference type="InterPro" id="IPR017441">
    <property type="entry name" value="Protein_kinase_ATP_BS"/>
</dbReference>
<dbReference type="InterPro" id="IPR016137">
    <property type="entry name" value="RGS"/>
</dbReference>
<dbReference type="InterPro" id="IPR036305">
    <property type="entry name" value="RGS_sf"/>
</dbReference>
<dbReference type="InterPro" id="IPR044926">
    <property type="entry name" value="RGS_subdomain_2"/>
</dbReference>
<dbReference type="InterPro" id="IPR008271">
    <property type="entry name" value="Ser/Thr_kinase_AS"/>
</dbReference>
<dbReference type="PANTHER" id="PTHR24355">
    <property type="entry name" value="G PROTEIN-COUPLED RECEPTOR KINASE/RIBOSOMAL PROTEIN S6 KINASE"/>
    <property type="match status" value="1"/>
</dbReference>
<dbReference type="PANTHER" id="PTHR24355:SF12">
    <property type="entry name" value="RHODOPSIN KINASE GRK7"/>
    <property type="match status" value="1"/>
</dbReference>
<dbReference type="Pfam" id="PF00069">
    <property type="entry name" value="Pkinase"/>
    <property type="match status" value="1"/>
</dbReference>
<dbReference type="Pfam" id="PF00615">
    <property type="entry name" value="RGS"/>
    <property type="match status" value="1"/>
</dbReference>
<dbReference type="PRINTS" id="PR00717">
    <property type="entry name" value="GPCRKINASE"/>
</dbReference>
<dbReference type="SMART" id="SM00315">
    <property type="entry name" value="RGS"/>
    <property type="match status" value="1"/>
</dbReference>
<dbReference type="SMART" id="SM00133">
    <property type="entry name" value="S_TK_X"/>
    <property type="match status" value="1"/>
</dbReference>
<dbReference type="SMART" id="SM00220">
    <property type="entry name" value="S_TKc"/>
    <property type="match status" value="1"/>
</dbReference>
<dbReference type="SUPFAM" id="SSF56112">
    <property type="entry name" value="Protein kinase-like (PK-like)"/>
    <property type="match status" value="1"/>
</dbReference>
<dbReference type="SUPFAM" id="SSF48097">
    <property type="entry name" value="Regulator of G-protein signaling, RGS"/>
    <property type="match status" value="1"/>
</dbReference>
<dbReference type="PROSITE" id="PS51285">
    <property type="entry name" value="AGC_KINASE_CTER"/>
    <property type="match status" value="1"/>
</dbReference>
<dbReference type="PROSITE" id="PS00107">
    <property type="entry name" value="PROTEIN_KINASE_ATP"/>
    <property type="match status" value="1"/>
</dbReference>
<dbReference type="PROSITE" id="PS50011">
    <property type="entry name" value="PROTEIN_KINASE_DOM"/>
    <property type="match status" value="1"/>
</dbReference>
<dbReference type="PROSITE" id="PS00108">
    <property type="entry name" value="PROTEIN_KINASE_ST"/>
    <property type="match status" value="1"/>
</dbReference>
<dbReference type="PROSITE" id="PS50132">
    <property type="entry name" value="RGS"/>
    <property type="match status" value="1"/>
</dbReference>
<reference key="1">
    <citation type="journal article" date="2008" name="J. Neurochem.">
        <title>Phosphorylation of GRK7 by PKA in cone photoreceptor cells is regulated by light.</title>
        <authorList>
            <person name="Osawa S."/>
            <person name="Jo R."/>
            <person name="Weiss E.R."/>
        </authorList>
    </citation>
    <scope>NUCLEOTIDE SEQUENCE [MRNA]</scope>
    <scope>PHOSPHORYLATION AT SER-36</scope>
</reference>
<proteinExistence type="evidence at protein level"/>
<protein>
    <recommendedName>
        <fullName>Rhodopsin kinase grk7-a</fullName>
        <ecNumber evidence="3">2.7.11.14</ecNumber>
    </recommendedName>
    <alternativeName>
        <fullName>G protein-coupled receptor kinase 7A</fullName>
    </alternativeName>
</protein>
<organism>
    <name type="scientific">Xenopus laevis</name>
    <name type="common">African clawed frog</name>
    <dbReference type="NCBI Taxonomy" id="8355"/>
    <lineage>
        <taxon>Eukaryota</taxon>
        <taxon>Metazoa</taxon>
        <taxon>Chordata</taxon>
        <taxon>Craniata</taxon>
        <taxon>Vertebrata</taxon>
        <taxon>Euteleostomi</taxon>
        <taxon>Amphibia</taxon>
        <taxon>Batrachia</taxon>
        <taxon>Anura</taxon>
        <taxon>Pipoidea</taxon>
        <taxon>Pipidae</taxon>
        <taxon>Xenopodinae</taxon>
        <taxon>Xenopus</taxon>
        <taxon>Xenopus</taxon>
    </lineage>
</organism>
<name>GRK7A_XENLA</name>
<comment type="function">
    <text evidence="3">Retina-specific kinase involved in the shutoff of the photoresponse and adaptation to changing light conditions via cone opsin phosphorylation, including rhodopsin (RHO).</text>
</comment>
<comment type="catalytic activity">
    <reaction evidence="3">
        <text>L-threonyl-[rhodopsin] + ATP = O-phospho-L-threonyl-[rhodopsin] + ADP + H(+)</text>
        <dbReference type="Rhea" id="RHEA:56552"/>
        <dbReference type="Rhea" id="RHEA-COMP:14596"/>
        <dbReference type="Rhea" id="RHEA-COMP:14597"/>
        <dbReference type="ChEBI" id="CHEBI:15378"/>
        <dbReference type="ChEBI" id="CHEBI:30013"/>
        <dbReference type="ChEBI" id="CHEBI:30616"/>
        <dbReference type="ChEBI" id="CHEBI:61977"/>
        <dbReference type="ChEBI" id="CHEBI:456216"/>
        <dbReference type="EC" id="2.7.11.14"/>
    </reaction>
</comment>
<comment type="catalytic activity">
    <reaction evidence="3">
        <text>L-seryl-[rhodopsin] + ATP = O-phospho-L-seryl-[rhodopsin] + ADP + H(+)</text>
        <dbReference type="Rhea" id="RHEA:23356"/>
        <dbReference type="Rhea" id="RHEA-COMP:14594"/>
        <dbReference type="Rhea" id="RHEA-COMP:14595"/>
        <dbReference type="ChEBI" id="CHEBI:15378"/>
        <dbReference type="ChEBI" id="CHEBI:29999"/>
        <dbReference type="ChEBI" id="CHEBI:30616"/>
        <dbReference type="ChEBI" id="CHEBI:83421"/>
        <dbReference type="ChEBI" id="CHEBI:456216"/>
        <dbReference type="EC" id="2.7.11.14"/>
    </reaction>
</comment>
<comment type="subcellular location">
    <subcellularLocation>
        <location evidence="2">Membrane</location>
        <topology evidence="2">Lipid-anchor</topology>
    </subcellularLocation>
</comment>
<comment type="PTM">
    <text evidence="1 10">Autophosphorylated in vitro at Ser-487 (By similarity). Phosphorylation at Ser-36 is regulated by light and activated by cAMP.</text>
</comment>
<comment type="miscellaneous">
    <text>Although the protein is present in a diversity of vertebrates ranging from bony fish to mammals, the mouse and rat orthologous proteins do not exist.</text>
</comment>
<comment type="similarity">
    <text evidence="11">Belongs to the protein kinase superfamily. AGC Ser/Thr protein kinase family. GPRK subfamily.</text>
</comment>
<sequence>MCDMGGLDNLIANTAYLQARKNSEGDVKELQKRRKSLSLPSTDVSRKEIKETITLDYQSICVEQPIGQRLFRDFLGTVSEYKLAEEFLEEVKEWELEEGSAKEQLMEKLVSRRFKEPAEGSLNFLGKDLSSRIQQAQSKDMPELILLAKDAGNAFLMDAPFQDFQNSPFYDRFLQWKAFERQPINQKYFYEFRILGKGGFGEVCAIQVKNTGQMYACKKLDKKRLKKKNGEKMALLEKEILEKVHSPFIVSLAYAYETKTHLCLVMSLMNGGDLKFHIYNIGEKGIEIKRVIFYSAQICCGILHLHSLKILYRDMKPENVLLDDNGNCRLSDLGLAVKVKEGKPITQRAGTNGYMAPEILTDVDYSYPVDWFAMGCSIYEMIAGHTPFRDPKEKTSKEEVKRKTIEDEVVFQHPVFTEEAKDICRLFLAKKPQNRLGSRTNDDDPRKHAFFKSINFQRLEAGMVDPPFVPDPSVVYAKDISDIADFSEVKGIEFDDKDSKFFKRFATGAIPISWQKEIIDTGLFDELNDPSREATGGGGNSGEKSGVCSIL</sequence>
<keyword id="KW-0067">ATP-binding</keyword>
<keyword id="KW-0418">Kinase</keyword>
<keyword id="KW-0449">Lipoprotein</keyword>
<keyword id="KW-0472">Membrane</keyword>
<keyword id="KW-0488">Methylation</keyword>
<keyword id="KW-0547">Nucleotide-binding</keyword>
<keyword id="KW-0597">Phosphoprotein</keyword>
<keyword id="KW-0636">Prenylation</keyword>
<keyword id="KW-1185">Reference proteome</keyword>
<keyword id="KW-0716">Sensory transduction</keyword>
<keyword id="KW-0723">Serine/threonine-protein kinase</keyword>
<keyword id="KW-0808">Transferase</keyword>
<keyword id="KW-0844">Vision</keyword>
<feature type="chain" id="PRO_0000412816" description="Rhodopsin kinase grk7-a">
    <location>
        <begin position="1"/>
        <end position="548"/>
    </location>
</feature>
<feature type="propeptide" id="PRO_0000412817" description="Removed in mature form" evidence="1">
    <location>
        <begin position="549"/>
        <end position="551"/>
    </location>
</feature>
<feature type="domain" description="RGS" evidence="6">
    <location>
        <begin position="57"/>
        <end position="174"/>
    </location>
</feature>
<feature type="domain" description="Protein kinase" evidence="5">
    <location>
        <begin position="189"/>
        <end position="451"/>
    </location>
</feature>
<feature type="domain" description="AGC-kinase C-terminal" evidence="7">
    <location>
        <begin position="452"/>
        <end position="517"/>
    </location>
</feature>
<feature type="region of interest" description="Disordered" evidence="9">
    <location>
        <begin position="529"/>
        <end position="551"/>
    </location>
</feature>
<feature type="compositionally biased region" description="Low complexity" evidence="9">
    <location>
        <begin position="542"/>
        <end position="551"/>
    </location>
</feature>
<feature type="active site" description="Proton acceptor" evidence="5 8">
    <location>
        <position position="314"/>
    </location>
</feature>
<feature type="binding site" evidence="5">
    <location>
        <begin position="195"/>
        <end position="203"/>
    </location>
    <ligand>
        <name>ATP</name>
        <dbReference type="ChEBI" id="CHEBI:30616"/>
    </ligand>
</feature>
<feature type="binding site" evidence="5">
    <location>
        <position position="218"/>
    </location>
    <ligand>
        <name>ATP</name>
        <dbReference type="ChEBI" id="CHEBI:30616"/>
    </ligand>
</feature>
<feature type="modified residue" description="Phosphoserine" evidence="10">
    <location>
        <position position="36"/>
    </location>
</feature>
<feature type="modified residue" description="Phosphoserine" evidence="1">
    <location>
        <position position="487"/>
    </location>
</feature>
<feature type="modified residue" description="Cysteine methyl ester" evidence="4">
    <location>
        <position position="548"/>
    </location>
</feature>
<feature type="lipid moiety-binding region" description="S-geranylgeranyl cysteine" evidence="4">
    <location>
        <position position="548"/>
    </location>
</feature>
<accession>B6CZ17</accession>
<gene>
    <name type="primary">grk7-a</name>
</gene>
<evidence type="ECO:0000250" key="1"/>
<evidence type="ECO:0000250" key="2">
    <source>
        <dbReference type="UniProtKB" id="Q8WMV0"/>
    </source>
</evidence>
<evidence type="ECO:0000250" key="3">
    <source>
        <dbReference type="UniProtKB" id="Q8WTQ7"/>
    </source>
</evidence>
<evidence type="ECO:0000255" key="4"/>
<evidence type="ECO:0000255" key="5">
    <source>
        <dbReference type="PROSITE-ProRule" id="PRU00159"/>
    </source>
</evidence>
<evidence type="ECO:0000255" key="6">
    <source>
        <dbReference type="PROSITE-ProRule" id="PRU00171"/>
    </source>
</evidence>
<evidence type="ECO:0000255" key="7">
    <source>
        <dbReference type="PROSITE-ProRule" id="PRU00618"/>
    </source>
</evidence>
<evidence type="ECO:0000255" key="8">
    <source>
        <dbReference type="PROSITE-ProRule" id="PRU10027"/>
    </source>
</evidence>
<evidence type="ECO:0000256" key="9">
    <source>
        <dbReference type="SAM" id="MobiDB-lite"/>
    </source>
</evidence>
<evidence type="ECO:0000269" key="10">
    <source>
    </source>
</evidence>
<evidence type="ECO:0000305" key="11"/>